<evidence type="ECO:0000255" key="1">
    <source>
        <dbReference type="HAMAP-Rule" id="MF_00270"/>
    </source>
</evidence>
<evidence type="ECO:0000305" key="2"/>
<proteinExistence type="inferred from homology"/>
<dbReference type="EMBL" id="CP000611">
    <property type="protein sequence ID" value="ABQ71776.1"/>
    <property type="molecule type" value="Genomic_DNA"/>
</dbReference>
<dbReference type="SMR" id="A5TYC6"/>
<dbReference type="KEGG" id="mra:MRA_0058"/>
<dbReference type="eggNOG" id="COG0238">
    <property type="taxonomic scope" value="Bacteria"/>
</dbReference>
<dbReference type="HOGENOM" id="CLU_148710_2_2_11"/>
<dbReference type="Proteomes" id="UP000001988">
    <property type="component" value="Chromosome"/>
</dbReference>
<dbReference type="GO" id="GO:0022627">
    <property type="term" value="C:cytosolic small ribosomal subunit"/>
    <property type="evidence" value="ECO:0007669"/>
    <property type="project" value="TreeGrafter"/>
</dbReference>
<dbReference type="GO" id="GO:0070181">
    <property type="term" value="F:small ribosomal subunit rRNA binding"/>
    <property type="evidence" value="ECO:0007669"/>
    <property type="project" value="TreeGrafter"/>
</dbReference>
<dbReference type="GO" id="GO:0003735">
    <property type="term" value="F:structural constituent of ribosome"/>
    <property type="evidence" value="ECO:0007669"/>
    <property type="project" value="InterPro"/>
</dbReference>
<dbReference type="GO" id="GO:0006412">
    <property type="term" value="P:translation"/>
    <property type="evidence" value="ECO:0007669"/>
    <property type="project" value="UniProtKB-UniRule"/>
</dbReference>
<dbReference type="FunFam" id="4.10.640.10:FF:000004">
    <property type="entry name" value="30S ribosomal protein S18"/>
    <property type="match status" value="1"/>
</dbReference>
<dbReference type="Gene3D" id="4.10.640.10">
    <property type="entry name" value="Ribosomal protein S18"/>
    <property type="match status" value="1"/>
</dbReference>
<dbReference type="HAMAP" id="MF_00270">
    <property type="entry name" value="Ribosomal_bS18"/>
    <property type="match status" value="1"/>
</dbReference>
<dbReference type="InterPro" id="IPR001648">
    <property type="entry name" value="Ribosomal_bS18"/>
</dbReference>
<dbReference type="InterPro" id="IPR018275">
    <property type="entry name" value="Ribosomal_bS18_CS"/>
</dbReference>
<dbReference type="InterPro" id="IPR036870">
    <property type="entry name" value="Ribosomal_bS18_sf"/>
</dbReference>
<dbReference type="NCBIfam" id="TIGR00165">
    <property type="entry name" value="S18"/>
    <property type="match status" value="1"/>
</dbReference>
<dbReference type="PANTHER" id="PTHR13479">
    <property type="entry name" value="30S RIBOSOMAL PROTEIN S18"/>
    <property type="match status" value="1"/>
</dbReference>
<dbReference type="PANTHER" id="PTHR13479:SF62">
    <property type="entry name" value="SMALL RIBOSOMAL SUBUNIT PROTEIN BS18A"/>
    <property type="match status" value="1"/>
</dbReference>
<dbReference type="Pfam" id="PF01084">
    <property type="entry name" value="Ribosomal_S18"/>
    <property type="match status" value="1"/>
</dbReference>
<dbReference type="PRINTS" id="PR00974">
    <property type="entry name" value="RIBOSOMALS18"/>
</dbReference>
<dbReference type="SUPFAM" id="SSF46911">
    <property type="entry name" value="Ribosomal protein S18"/>
    <property type="match status" value="1"/>
</dbReference>
<dbReference type="PROSITE" id="PS00057">
    <property type="entry name" value="RIBOSOMAL_S18"/>
    <property type="match status" value="1"/>
</dbReference>
<keyword id="KW-1185">Reference proteome</keyword>
<keyword id="KW-0687">Ribonucleoprotein</keyword>
<keyword id="KW-0689">Ribosomal protein</keyword>
<keyword id="KW-0694">RNA-binding</keyword>
<keyword id="KW-0699">rRNA-binding</keyword>
<comment type="function">
    <text evidence="1">Binds as a heterodimer with protein bS6 to the central domain of the 16S rRNA, where it helps stabilize the platform of the 30S subunit.</text>
</comment>
<comment type="subunit">
    <text evidence="1">Part of the 30S ribosomal subunit. Forms a tight heterodimer with protein bS6.</text>
</comment>
<comment type="similarity">
    <text evidence="1">Belongs to the bacterial ribosomal protein bS18 family.</text>
</comment>
<feature type="chain" id="PRO_0000345506" description="Small ribosomal subunit protein bS18A">
    <location>
        <begin position="1"/>
        <end position="84"/>
    </location>
</feature>
<protein>
    <recommendedName>
        <fullName evidence="1">Small ribosomal subunit protein bS18A</fullName>
    </recommendedName>
    <alternativeName>
        <fullName evidence="2">30S ribosomal protein S18 1</fullName>
    </alternativeName>
</protein>
<reference key="1">
    <citation type="journal article" date="2008" name="PLoS ONE">
        <title>Genetic basis of virulence attenuation revealed by comparative genomic analysis of Mycobacterium tuberculosis strain H37Ra versus H37Rv.</title>
        <authorList>
            <person name="Zheng H."/>
            <person name="Lu L."/>
            <person name="Wang B."/>
            <person name="Pu S."/>
            <person name="Zhang X."/>
            <person name="Zhu G."/>
            <person name="Shi W."/>
            <person name="Zhang L."/>
            <person name="Wang H."/>
            <person name="Wang S."/>
            <person name="Zhao G."/>
            <person name="Zhang Y."/>
        </authorList>
    </citation>
    <scope>NUCLEOTIDE SEQUENCE [LARGE SCALE GENOMIC DNA]</scope>
    <source>
        <strain>ATCC 25177 / H37Ra</strain>
    </source>
</reference>
<organism>
    <name type="scientific">Mycobacterium tuberculosis (strain ATCC 25177 / H37Ra)</name>
    <dbReference type="NCBI Taxonomy" id="419947"/>
    <lineage>
        <taxon>Bacteria</taxon>
        <taxon>Bacillati</taxon>
        <taxon>Actinomycetota</taxon>
        <taxon>Actinomycetes</taxon>
        <taxon>Mycobacteriales</taxon>
        <taxon>Mycobacteriaceae</taxon>
        <taxon>Mycobacterium</taxon>
        <taxon>Mycobacterium tuberculosis complex</taxon>
    </lineage>
</organism>
<accession>A5TYC6</accession>
<gene>
    <name evidence="1" type="primary">rpsR1</name>
    <name type="ordered locus">MRA_0058</name>
</gene>
<sequence length="84" mass="9543">MAKSSKRRPAPEKPVKTRKCVFCAKKDQAIDYKDTALLRTYISERGKIRARRVTGNCVQHQRDIALAVKNAREVALLPFTSSVR</sequence>
<name>RS181_MYCTA</name>